<name>Y4EE_SINFN</name>
<keyword id="KW-1003">Cell membrane</keyword>
<keyword id="KW-0449">Lipoprotein</keyword>
<keyword id="KW-0472">Membrane</keyword>
<keyword id="KW-0564">Palmitate</keyword>
<keyword id="KW-0614">Plasmid</keyword>
<keyword id="KW-1185">Reference proteome</keyword>
<keyword id="KW-0732">Signal</keyword>
<dbReference type="EMBL" id="U00090">
    <property type="protein sequence ID" value="AAB91650.1"/>
    <property type="molecule type" value="Genomic_DNA"/>
</dbReference>
<dbReference type="RefSeq" id="NP_443838.1">
    <property type="nucleotide sequence ID" value="NC_000914.2"/>
</dbReference>
<dbReference type="RefSeq" id="WP_010875400.1">
    <property type="nucleotide sequence ID" value="NC_000914.2"/>
</dbReference>
<dbReference type="KEGG" id="rhi:NGR_a03880"/>
<dbReference type="HOGENOM" id="CLU_760474_0_0_5"/>
<dbReference type="OrthoDB" id="8281587at2"/>
<dbReference type="Proteomes" id="UP000001054">
    <property type="component" value="Plasmid pNGR234a"/>
</dbReference>
<dbReference type="GO" id="GO:0005886">
    <property type="term" value="C:plasma membrane"/>
    <property type="evidence" value="ECO:0007669"/>
    <property type="project" value="UniProtKB-SubCell"/>
</dbReference>
<dbReference type="PROSITE" id="PS51257">
    <property type="entry name" value="PROKAR_LIPOPROTEIN"/>
    <property type="match status" value="1"/>
</dbReference>
<geneLocation type="plasmid">
    <name>sym pNGR234a</name>
</geneLocation>
<protein>
    <recommendedName>
        <fullName>Uncharacterized lipoprotein y4eE</fullName>
    </recommendedName>
</protein>
<feature type="signal peptide" evidence="1">
    <location>
        <begin position="1"/>
        <end position="15"/>
    </location>
</feature>
<feature type="chain" id="PRO_0000014161" description="Uncharacterized lipoprotein y4eE">
    <location>
        <begin position="16"/>
        <end position="358"/>
    </location>
</feature>
<feature type="region of interest" description="Disordered" evidence="2">
    <location>
        <begin position="331"/>
        <end position="358"/>
    </location>
</feature>
<feature type="compositionally biased region" description="Polar residues" evidence="2">
    <location>
        <begin position="347"/>
        <end position="358"/>
    </location>
</feature>
<feature type="lipid moiety-binding region" description="N-palmitoyl cysteine" evidence="1">
    <location>
        <position position="16"/>
    </location>
</feature>
<feature type="lipid moiety-binding region" description="S-diacylglycerol cysteine" evidence="1">
    <location>
        <position position="16"/>
    </location>
</feature>
<gene>
    <name type="ordered locus">NGR_a03880</name>
    <name type="ORF">y4eE</name>
</gene>
<proteinExistence type="inferred from homology"/>
<evidence type="ECO:0000255" key="1">
    <source>
        <dbReference type="PROSITE-ProRule" id="PRU00303"/>
    </source>
</evidence>
<evidence type="ECO:0000256" key="2">
    <source>
        <dbReference type="SAM" id="MobiDB-lite"/>
    </source>
</evidence>
<organism>
    <name type="scientific">Sinorhizobium fredii (strain NBRC 101917 / NGR234)</name>
    <dbReference type="NCBI Taxonomy" id="394"/>
    <lineage>
        <taxon>Bacteria</taxon>
        <taxon>Pseudomonadati</taxon>
        <taxon>Pseudomonadota</taxon>
        <taxon>Alphaproteobacteria</taxon>
        <taxon>Hyphomicrobiales</taxon>
        <taxon>Rhizobiaceae</taxon>
        <taxon>Sinorhizobium/Ensifer group</taxon>
        <taxon>Sinorhizobium</taxon>
    </lineage>
</organism>
<reference key="1">
    <citation type="journal article" date="1997" name="Nature">
        <title>Molecular basis of symbiosis between Rhizobium and legumes.</title>
        <authorList>
            <person name="Freiberg C.A."/>
            <person name="Fellay R."/>
            <person name="Bairoch A."/>
            <person name="Broughton W.J."/>
            <person name="Rosenthal A."/>
            <person name="Perret X."/>
        </authorList>
    </citation>
    <scope>NUCLEOTIDE SEQUENCE [LARGE SCALE GENOMIC DNA]</scope>
    <source>
        <strain>NBRC 101917 / NGR234</strain>
    </source>
</reference>
<reference key="2">
    <citation type="journal article" date="2009" name="Appl. Environ. Microbiol.">
        <title>Rhizobium sp. strain NGR234 possesses a remarkable number of secretion systems.</title>
        <authorList>
            <person name="Schmeisser C."/>
            <person name="Liesegang H."/>
            <person name="Krysciak D."/>
            <person name="Bakkou N."/>
            <person name="Le Quere A."/>
            <person name="Wollherr A."/>
            <person name="Heinemeyer I."/>
            <person name="Morgenstern B."/>
            <person name="Pommerening-Roeser A."/>
            <person name="Flores M."/>
            <person name="Palacios R."/>
            <person name="Brenner S."/>
            <person name="Gottschalk G."/>
            <person name="Schmitz R.A."/>
            <person name="Broughton W.J."/>
            <person name="Perret X."/>
            <person name="Strittmatter A.W."/>
            <person name="Streit W.R."/>
        </authorList>
    </citation>
    <scope>NUCLEOTIDE SEQUENCE [LARGE SCALE GENOMIC DNA]</scope>
    <source>
        <strain>NBRC 101917 / NGR234</strain>
    </source>
</reference>
<comment type="subcellular location">
    <subcellularLocation>
        <location evidence="1">Cell membrane</location>
        <topology evidence="1">Lipid-anchor</topology>
    </subcellularLocation>
</comment>
<sequence length="358" mass="38493">MITGKTISLPLSVIACLGAGASQAAACANQTDCLKSASAKVSQTLTPKVVPVFGDYPKLYIHDSAANEDYTVPDTTKQEFDFYTNKTSFNLPRRSSIETREIASISPAMGFTVLLVEKTRDNTVSNGGSTLSLLSSNSNDAYLSFALGAKPSSSGQKWSFAKSLLQGNKAQTAYWQKPWDMNLLGPTGDFSGTEWIYYTFTPDGKVRIDRFAPYTYFLAFTAYQWDEAVLDGGFPHFPFDTGTPTNRPQSVTFGSVGPWLIGAAGAPGQTPPTSEPIEALPGFEGATIFSAPLSMKEVIAYQNSLRGSYFLDVDMLPCNSGQYLSGRISTPCGTGSPGNPPPNINSVAQHRISTNTNR</sequence>
<accession>P55428</accession>